<comment type="function">
    <text evidence="1">IGPS catalyzes the conversion of PRFAR and glutamine to IGP, AICAR and glutamate. The HisF subunit catalyzes the cyclization activity that produces IGP and AICAR from PRFAR using the ammonia provided by the HisH subunit.</text>
</comment>
<comment type="catalytic activity">
    <reaction evidence="1">
        <text>5-[(5-phospho-1-deoxy-D-ribulos-1-ylimino)methylamino]-1-(5-phospho-beta-D-ribosyl)imidazole-4-carboxamide + L-glutamine = D-erythro-1-(imidazol-4-yl)glycerol 3-phosphate + 5-amino-1-(5-phospho-beta-D-ribosyl)imidazole-4-carboxamide + L-glutamate + H(+)</text>
        <dbReference type="Rhea" id="RHEA:24793"/>
        <dbReference type="ChEBI" id="CHEBI:15378"/>
        <dbReference type="ChEBI" id="CHEBI:29985"/>
        <dbReference type="ChEBI" id="CHEBI:58278"/>
        <dbReference type="ChEBI" id="CHEBI:58359"/>
        <dbReference type="ChEBI" id="CHEBI:58475"/>
        <dbReference type="ChEBI" id="CHEBI:58525"/>
        <dbReference type="EC" id="4.3.2.10"/>
    </reaction>
</comment>
<comment type="pathway">
    <text evidence="1">Amino-acid biosynthesis; L-histidine biosynthesis; L-histidine from 5-phospho-alpha-D-ribose 1-diphosphate: step 5/9.</text>
</comment>
<comment type="subunit">
    <text evidence="1">Heterodimer of HisH and HisF.</text>
</comment>
<comment type="subcellular location">
    <subcellularLocation>
        <location evidence="1">Cytoplasm</location>
    </subcellularLocation>
</comment>
<comment type="similarity">
    <text evidence="1">Belongs to the HisA/HisF family.</text>
</comment>
<accession>A7GMV0</accession>
<evidence type="ECO:0000255" key="1">
    <source>
        <dbReference type="HAMAP-Rule" id="MF_01013"/>
    </source>
</evidence>
<name>HIS6_BACCN</name>
<sequence length="252" mass="26897">MLAKRIIPCLDVKAGRVVKGVNFIGLQDIGDPVEIAALYNQAGADEIVFLDITATYEERKTIVDVVEKTASKVFIPLTVGGGISTVKDIYTLLRAGADKVSLNSAAVKNPLFIQEGAEHFGSQCIVVAIDARKVEEDKWHVYVNGGRTDTGIDAVHWAKQVAELGAGEILLTSMDADGTKDGYNLRLTDIISANVSIPVIASGGCGSANHIVEVFAHTSVNAALAASIFHYGECTVQEVKQKLQYAGIEVRI</sequence>
<protein>
    <recommendedName>
        <fullName evidence="1">Imidazole glycerol phosphate synthase subunit HisF</fullName>
        <ecNumber evidence="1">4.3.2.10</ecNumber>
    </recommendedName>
    <alternativeName>
        <fullName evidence="1">IGP synthase cyclase subunit</fullName>
    </alternativeName>
    <alternativeName>
        <fullName evidence="1">IGP synthase subunit HisF</fullName>
    </alternativeName>
    <alternativeName>
        <fullName evidence="1">ImGP synthase subunit HisF</fullName>
        <shortName evidence="1">IGPS subunit HisF</shortName>
    </alternativeName>
</protein>
<keyword id="KW-0028">Amino-acid biosynthesis</keyword>
<keyword id="KW-0963">Cytoplasm</keyword>
<keyword id="KW-0368">Histidine biosynthesis</keyword>
<keyword id="KW-0456">Lyase</keyword>
<gene>
    <name evidence="1" type="primary">hisF</name>
    <name type="ordered locus">Bcer98_1133</name>
</gene>
<reference key="1">
    <citation type="journal article" date="2008" name="Chem. Biol. Interact.">
        <title>Extending the Bacillus cereus group genomics to putative food-borne pathogens of different toxicity.</title>
        <authorList>
            <person name="Lapidus A."/>
            <person name="Goltsman E."/>
            <person name="Auger S."/>
            <person name="Galleron N."/>
            <person name="Segurens B."/>
            <person name="Dossat C."/>
            <person name="Land M.L."/>
            <person name="Broussolle V."/>
            <person name="Brillard J."/>
            <person name="Guinebretiere M.-H."/>
            <person name="Sanchis V."/>
            <person name="Nguen-the C."/>
            <person name="Lereclus D."/>
            <person name="Richardson P."/>
            <person name="Wincker P."/>
            <person name="Weissenbach J."/>
            <person name="Ehrlich S.D."/>
            <person name="Sorokin A."/>
        </authorList>
    </citation>
    <scope>NUCLEOTIDE SEQUENCE [LARGE SCALE GENOMIC DNA]</scope>
    <source>
        <strain>DSM 22905 / CIP 110041 / 391-98 / NVH 391-98</strain>
    </source>
</reference>
<organism>
    <name type="scientific">Bacillus cytotoxicus (strain DSM 22905 / CIP 110041 / 391-98 / NVH 391-98)</name>
    <dbReference type="NCBI Taxonomy" id="315749"/>
    <lineage>
        <taxon>Bacteria</taxon>
        <taxon>Bacillati</taxon>
        <taxon>Bacillota</taxon>
        <taxon>Bacilli</taxon>
        <taxon>Bacillales</taxon>
        <taxon>Bacillaceae</taxon>
        <taxon>Bacillus</taxon>
        <taxon>Bacillus cereus group</taxon>
    </lineage>
</organism>
<feature type="chain" id="PRO_1000084049" description="Imidazole glycerol phosphate synthase subunit HisF">
    <location>
        <begin position="1"/>
        <end position="252"/>
    </location>
</feature>
<feature type="active site" evidence="1">
    <location>
        <position position="11"/>
    </location>
</feature>
<feature type="active site" evidence="1">
    <location>
        <position position="130"/>
    </location>
</feature>
<proteinExistence type="inferred from homology"/>
<dbReference type="EC" id="4.3.2.10" evidence="1"/>
<dbReference type="EMBL" id="CP000764">
    <property type="protein sequence ID" value="ABS21458.1"/>
    <property type="molecule type" value="Genomic_DNA"/>
</dbReference>
<dbReference type="RefSeq" id="WP_011984211.1">
    <property type="nucleotide sequence ID" value="NC_009674.1"/>
</dbReference>
<dbReference type="SMR" id="A7GMV0"/>
<dbReference type="STRING" id="315749.Bcer98_1133"/>
<dbReference type="GeneID" id="33896489"/>
<dbReference type="KEGG" id="bcy:Bcer98_1133"/>
<dbReference type="eggNOG" id="COG0107">
    <property type="taxonomic scope" value="Bacteria"/>
</dbReference>
<dbReference type="HOGENOM" id="CLU_048577_4_0_9"/>
<dbReference type="OrthoDB" id="9781903at2"/>
<dbReference type="UniPathway" id="UPA00031">
    <property type="reaction ID" value="UER00010"/>
</dbReference>
<dbReference type="Proteomes" id="UP000002300">
    <property type="component" value="Chromosome"/>
</dbReference>
<dbReference type="GO" id="GO:0005737">
    <property type="term" value="C:cytoplasm"/>
    <property type="evidence" value="ECO:0007669"/>
    <property type="project" value="UniProtKB-SubCell"/>
</dbReference>
<dbReference type="GO" id="GO:0000107">
    <property type="term" value="F:imidazoleglycerol-phosphate synthase activity"/>
    <property type="evidence" value="ECO:0007669"/>
    <property type="project" value="UniProtKB-UniRule"/>
</dbReference>
<dbReference type="GO" id="GO:0016829">
    <property type="term" value="F:lyase activity"/>
    <property type="evidence" value="ECO:0007669"/>
    <property type="project" value="UniProtKB-KW"/>
</dbReference>
<dbReference type="GO" id="GO:0000105">
    <property type="term" value="P:L-histidine biosynthetic process"/>
    <property type="evidence" value="ECO:0007669"/>
    <property type="project" value="UniProtKB-UniRule"/>
</dbReference>
<dbReference type="CDD" id="cd04731">
    <property type="entry name" value="HisF"/>
    <property type="match status" value="1"/>
</dbReference>
<dbReference type="FunFam" id="3.20.20.70:FF:000006">
    <property type="entry name" value="Imidazole glycerol phosphate synthase subunit HisF"/>
    <property type="match status" value="1"/>
</dbReference>
<dbReference type="Gene3D" id="3.20.20.70">
    <property type="entry name" value="Aldolase class I"/>
    <property type="match status" value="1"/>
</dbReference>
<dbReference type="HAMAP" id="MF_01013">
    <property type="entry name" value="HisF"/>
    <property type="match status" value="1"/>
</dbReference>
<dbReference type="InterPro" id="IPR013785">
    <property type="entry name" value="Aldolase_TIM"/>
</dbReference>
<dbReference type="InterPro" id="IPR006062">
    <property type="entry name" value="His_biosynth"/>
</dbReference>
<dbReference type="InterPro" id="IPR004651">
    <property type="entry name" value="HisF"/>
</dbReference>
<dbReference type="InterPro" id="IPR050064">
    <property type="entry name" value="IGPS_HisA/HisF"/>
</dbReference>
<dbReference type="InterPro" id="IPR011060">
    <property type="entry name" value="RibuloseP-bd_barrel"/>
</dbReference>
<dbReference type="NCBIfam" id="TIGR00735">
    <property type="entry name" value="hisF"/>
    <property type="match status" value="1"/>
</dbReference>
<dbReference type="PANTHER" id="PTHR21235:SF2">
    <property type="entry name" value="IMIDAZOLE GLYCEROL PHOSPHATE SYNTHASE HISHF"/>
    <property type="match status" value="1"/>
</dbReference>
<dbReference type="PANTHER" id="PTHR21235">
    <property type="entry name" value="IMIDAZOLE GLYCEROL PHOSPHATE SYNTHASE SUBUNIT HISF/H IGP SYNTHASE SUBUNIT HISF/H"/>
    <property type="match status" value="1"/>
</dbReference>
<dbReference type="Pfam" id="PF00977">
    <property type="entry name" value="His_biosynth"/>
    <property type="match status" value="1"/>
</dbReference>
<dbReference type="SUPFAM" id="SSF51366">
    <property type="entry name" value="Ribulose-phoshate binding barrel"/>
    <property type="match status" value="1"/>
</dbReference>